<proteinExistence type="evidence at transcript level"/>
<comment type="function">
    <text evidence="1">Catalyzes the degradation of hydrogen peroxide (H(2)O(2)) generated by peroxisomal oxidases to water and oxygen, thereby protecting cells from the toxic effects of hydrogen peroxide.</text>
</comment>
<comment type="catalytic activity">
    <reaction evidence="3">
        <text>2 H2O2 = O2 + 2 H2O</text>
        <dbReference type="Rhea" id="RHEA:20309"/>
        <dbReference type="ChEBI" id="CHEBI:15377"/>
        <dbReference type="ChEBI" id="CHEBI:15379"/>
        <dbReference type="ChEBI" id="CHEBI:16240"/>
        <dbReference type="EC" id="1.11.1.6"/>
    </reaction>
</comment>
<comment type="cofactor">
    <cofactor evidence="1">
        <name>heme</name>
        <dbReference type="ChEBI" id="CHEBI:30413"/>
    </cofactor>
</comment>
<comment type="subunit">
    <text>Homotetramer.</text>
</comment>
<comment type="subcellular location">
    <subcellularLocation>
        <location evidence="2">Cytoplasm</location>
        <location evidence="2">Cytosol</location>
    </subcellularLocation>
    <subcellularLocation>
        <location evidence="2">Peroxisome matrix</location>
    </subcellularLocation>
</comment>
<comment type="similarity">
    <text evidence="4">Belongs to the catalase family.</text>
</comment>
<keyword id="KW-0963">Cytoplasm</keyword>
<keyword id="KW-0349">Heme</keyword>
<keyword id="KW-0376">Hydrogen peroxide</keyword>
<keyword id="KW-0408">Iron</keyword>
<keyword id="KW-0479">Metal-binding</keyword>
<keyword id="KW-0560">Oxidoreductase</keyword>
<keyword id="KW-0575">Peroxidase</keyword>
<keyword id="KW-0576">Peroxisome</keyword>
<dbReference type="EC" id="1.11.1.6" evidence="3"/>
<dbReference type="EMBL" id="X60169">
    <property type="protein sequence ID" value="CAA42736.1"/>
    <property type="molecule type" value="mRNA"/>
</dbReference>
<dbReference type="PIR" id="S18346">
    <property type="entry name" value="CSPM"/>
</dbReference>
<dbReference type="SMR" id="P25890"/>
<dbReference type="PeroxiBase" id="398">
    <property type="entry name" value="PsKat01"/>
</dbReference>
<dbReference type="GO" id="GO:0005829">
    <property type="term" value="C:cytosol"/>
    <property type="evidence" value="ECO:0007669"/>
    <property type="project" value="UniProtKB-SubCell"/>
</dbReference>
<dbReference type="GO" id="GO:0005782">
    <property type="term" value="C:peroxisomal matrix"/>
    <property type="evidence" value="ECO:0007669"/>
    <property type="project" value="UniProtKB-SubCell"/>
</dbReference>
<dbReference type="GO" id="GO:0005886">
    <property type="term" value="C:plasma membrane"/>
    <property type="evidence" value="ECO:0007669"/>
    <property type="project" value="TreeGrafter"/>
</dbReference>
<dbReference type="GO" id="GO:0004096">
    <property type="term" value="F:catalase activity"/>
    <property type="evidence" value="ECO:0007669"/>
    <property type="project" value="UniProtKB-EC"/>
</dbReference>
<dbReference type="GO" id="GO:0020037">
    <property type="term" value="F:heme binding"/>
    <property type="evidence" value="ECO:0007669"/>
    <property type="project" value="InterPro"/>
</dbReference>
<dbReference type="GO" id="GO:0046872">
    <property type="term" value="F:metal ion binding"/>
    <property type="evidence" value="ECO:0007669"/>
    <property type="project" value="UniProtKB-KW"/>
</dbReference>
<dbReference type="GO" id="GO:0042744">
    <property type="term" value="P:hydrogen peroxide catabolic process"/>
    <property type="evidence" value="ECO:0007669"/>
    <property type="project" value="UniProtKB-KW"/>
</dbReference>
<dbReference type="GO" id="GO:0042542">
    <property type="term" value="P:response to hydrogen peroxide"/>
    <property type="evidence" value="ECO:0007669"/>
    <property type="project" value="TreeGrafter"/>
</dbReference>
<dbReference type="CDD" id="cd08154">
    <property type="entry name" value="catalase_clade_1"/>
    <property type="match status" value="1"/>
</dbReference>
<dbReference type="FunFam" id="2.40.180.10:FF:000002">
    <property type="entry name" value="Catalase"/>
    <property type="match status" value="1"/>
</dbReference>
<dbReference type="Gene3D" id="2.40.180.10">
    <property type="entry name" value="Catalase core domain"/>
    <property type="match status" value="1"/>
</dbReference>
<dbReference type="InterPro" id="IPR018028">
    <property type="entry name" value="Catalase"/>
</dbReference>
<dbReference type="InterPro" id="IPR024708">
    <property type="entry name" value="Catalase_AS"/>
</dbReference>
<dbReference type="InterPro" id="IPR024711">
    <property type="entry name" value="Catalase_clade1/3"/>
</dbReference>
<dbReference type="InterPro" id="IPR011614">
    <property type="entry name" value="Catalase_core"/>
</dbReference>
<dbReference type="InterPro" id="IPR002226">
    <property type="entry name" value="Catalase_haem_BS"/>
</dbReference>
<dbReference type="InterPro" id="IPR010582">
    <property type="entry name" value="Catalase_immune_responsive"/>
</dbReference>
<dbReference type="InterPro" id="IPR020835">
    <property type="entry name" value="Catalase_sf"/>
</dbReference>
<dbReference type="PANTHER" id="PTHR11465">
    <property type="entry name" value="CATALASE"/>
    <property type="match status" value="1"/>
</dbReference>
<dbReference type="PANTHER" id="PTHR11465:SF23">
    <property type="entry name" value="CATALASE-2"/>
    <property type="match status" value="1"/>
</dbReference>
<dbReference type="Pfam" id="PF00199">
    <property type="entry name" value="Catalase"/>
    <property type="match status" value="1"/>
</dbReference>
<dbReference type="Pfam" id="PF06628">
    <property type="entry name" value="Catalase-rel"/>
    <property type="match status" value="1"/>
</dbReference>
<dbReference type="PIRSF" id="PIRSF038928">
    <property type="entry name" value="Catalase_clade1-3"/>
    <property type="match status" value="1"/>
</dbReference>
<dbReference type="PRINTS" id="PR00067">
    <property type="entry name" value="CATALASE"/>
</dbReference>
<dbReference type="SMART" id="SM01060">
    <property type="entry name" value="Catalase"/>
    <property type="match status" value="1"/>
</dbReference>
<dbReference type="SUPFAM" id="SSF56634">
    <property type="entry name" value="Heme-dependent catalase-like"/>
    <property type="match status" value="1"/>
</dbReference>
<dbReference type="PROSITE" id="PS00437">
    <property type="entry name" value="CATALASE_1"/>
    <property type="match status" value="1"/>
</dbReference>
<dbReference type="PROSITE" id="PS00438">
    <property type="entry name" value="CATALASE_2"/>
    <property type="match status" value="1"/>
</dbReference>
<dbReference type="PROSITE" id="PS51402">
    <property type="entry name" value="CATALASE_3"/>
    <property type="match status" value="1"/>
</dbReference>
<evidence type="ECO:0000250" key="1">
    <source>
        <dbReference type="UniProtKB" id="P04040"/>
    </source>
</evidence>
<evidence type="ECO:0000250" key="2">
    <source>
        <dbReference type="UniProtKB" id="P25819"/>
    </source>
</evidence>
<evidence type="ECO:0000255" key="3">
    <source>
        <dbReference type="PROSITE-ProRule" id="PRU10013"/>
    </source>
</evidence>
<evidence type="ECO:0000305" key="4"/>
<sequence length="494" mass="57345">MDPYKHRPSSAFNSPFWTTNSGAPVWNNNSSLTVGSRGPILLEDYHLVEKLAQFDRERIPERVVHARGASAKGFFEVTHDISHLTCADFLRAPGVQTPVIVRFSTVIHERGSPETLRDPRGFAVKFYTREGNYDLVGNNFPVFFVHDGMNFPDMVHALKPNPQTHIQENWRILDFFYNFPESLHMFSFLFDDVGVPQDYRHMDGFGVNTYTLINKAGKSVYVKFHWKPTCGVKCLLEEEAIQVGGSNHSHATKDLYDSIAAGNYPEWKLYIQTIDPAHEDRFEFDPLDVTKTWPEDIIPLQPVGRMVLNKNIDNFFAENEQLAFCPAIMLPGIYYSDDKMLQTRVFSYADSQRHRLGPNYLQLPVNAPKWSHHNNHHEGFMNAIHRDEEVNYFPSRHDTVRHAERVPIPTTHLSARREKCNIPKQNHFKQAGERYRTWAPDRQERFLRRWVEALSDTDPRITHEIRSIWVSYWSQADRSLGQKLASHLNMRPSI</sequence>
<reference key="1">
    <citation type="journal article" date="1991" name="Plant Mol. Biol.">
        <title>Isolation and characterization of a pea catalase cDNA.</title>
        <authorList>
            <person name="Isin S.H."/>
            <person name="Allen R.D."/>
        </authorList>
    </citation>
    <scope>NUCLEOTIDE SEQUENCE [MRNA]</scope>
    <source>
        <tissue>Leaf</tissue>
    </source>
</reference>
<organism>
    <name type="scientific">Pisum sativum</name>
    <name type="common">Garden pea</name>
    <name type="synonym">Lathyrus oleraceus</name>
    <dbReference type="NCBI Taxonomy" id="3888"/>
    <lineage>
        <taxon>Eukaryota</taxon>
        <taxon>Viridiplantae</taxon>
        <taxon>Streptophyta</taxon>
        <taxon>Embryophyta</taxon>
        <taxon>Tracheophyta</taxon>
        <taxon>Spermatophyta</taxon>
        <taxon>Magnoliopsida</taxon>
        <taxon>eudicotyledons</taxon>
        <taxon>Gunneridae</taxon>
        <taxon>Pentapetalae</taxon>
        <taxon>rosids</taxon>
        <taxon>fabids</taxon>
        <taxon>Fabales</taxon>
        <taxon>Fabaceae</taxon>
        <taxon>Papilionoideae</taxon>
        <taxon>50 kb inversion clade</taxon>
        <taxon>NPAAA clade</taxon>
        <taxon>Hologalegina</taxon>
        <taxon>IRL clade</taxon>
        <taxon>Fabeae</taxon>
        <taxon>Pisum</taxon>
    </lineage>
</organism>
<feature type="chain" id="PRO_0000084954" description="Catalase">
    <location>
        <begin position="1"/>
        <end position="494"/>
    </location>
</feature>
<feature type="active site" evidence="3">
    <location>
        <position position="65"/>
    </location>
</feature>
<feature type="active site" evidence="3">
    <location>
        <position position="138"/>
    </location>
</feature>
<feature type="binding site" description="axial binding residue" evidence="1">
    <location>
        <position position="348"/>
    </location>
    <ligand>
        <name>heme</name>
        <dbReference type="ChEBI" id="CHEBI:30413"/>
    </ligand>
    <ligandPart>
        <name>Fe</name>
        <dbReference type="ChEBI" id="CHEBI:18248"/>
    </ligandPart>
</feature>
<accession>P25890</accession>
<name>CATA_PEA</name>
<protein>
    <recommendedName>
        <fullName>Catalase</fullName>
        <ecNumber evidence="3">1.11.1.6</ecNumber>
    </recommendedName>
</protein>